<keyword id="KW-0227">DNA damage</keyword>
<keyword id="KW-0233">DNA recombination</keyword>
<keyword id="KW-0234">DNA repair</keyword>
<keyword id="KW-0539">Nucleus</keyword>
<keyword id="KW-0597">Phosphoprotein</keyword>
<keyword id="KW-1185">Reference proteome</keyword>
<feature type="chain" id="PRO_0000388010" description="Structure-specific endonuclease subunit SLX4">
    <location>
        <begin position="1"/>
        <end position="856"/>
    </location>
</feature>
<feature type="region of interest" description="Disordered" evidence="2">
    <location>
        <begin position="1"/>
        <end position="24"/>
    </location>
</feature>
<feature type="region of interest" description="Disordered" evidence="2">
    <location>
        <begin position="38"/>
        <end position="65"/>
    </location>
</feature>
<feature type="region of interest" description="Disordered" evidence="2">
    <location>
        <begin position="88"/>
        <end position="121"/>
    </location>
</feature>
<feature type="region of interest" description="Disordered" evidence="2">
    <location>
        <begin position="139"/>
        <end position="202"/>
    </location>
</feature>
<feature type="region of interest" description="Disordered" evidence="2">
    <location>
        <begin position="296"/>
        <end position="326"/>
    </location>
</feature>
<feature type="region of interest" description="Disordered" evidence="2">
    <location>
        <begin position="362"/>
        <end position="392"/>
    </location>
</feature>
<feature type="region of interest" description="Disordered" evidence="2">
    <location>
        <begin position="621"/>
        <end position="640"/>
    </location>
</feature>
<feature type="region of interest" description="Disordered" evidence="2">
    <location>
        <begin position="668"/>
        <end position="689"/>
    </location>
</feature>
<feature type="region of interest" description="Disordered" evidence="2">
    <location>
        <begin position="715"/>
        <end position="742"/>
    </location>
</feature>
<feature type="compositionally biased region" description="Polar residues" evidence="2">
    <location>
        <begin position="1"/>
        <end position="19"/>
    </location>
</feature>
<feature type="compositionally biased region" description="Low complexity" evidence="2">
    <location>
        <begin position="51"/>
        <end position="60"/>
    </location>
</feature>
<feature type="compositionally biased region" description="Basic residues" evidence="2">
    <location>
        <begin position="139"/>
        <end position="152"/>
    </location>
</feature>
<feature type="compositionally biased region" description="Polar residues" evidence="2">
    <location>
        <begin position="296"/>
        <end position="309"/>
    </location>
</feature>
<feature type="compositionally biased region" description="Polar residues" evidence="2">
    <location>
        <begin position="673"/>
        <end position="686"/>
    </location>
</feature>
<sequence>MDNAAIASQSNTPPSNGRSSARFVTPISVHSSPISAEVIEPSSPFSPPSPSTLLTSLSKSPSHKISNLQMDGAKTTCLEVIQNSSLVVDSPKRQDKSITGSKAKPASTMRHGQRTASHKMATQTEIQTVDGDRLIVSPKTRKKKAATAKRTRKQDGVAERRLHGHVSKVKSPGDLKLDAKIPPSKPCDNKAPSVGDNTDNELERQTGGLQLEKATKRRLDWTPTKEGPIPMVDLAEVHSSSCGKSVIRTHSAGTLLSNYGFSGVVNTSLAPMPETCDNGPTTKRLMELQNFYSASGIQTPTESRPATNDSQSISSKQQRVKVKKPQKAKLTTLTSYVTAKYSVVDQTADLDRIETVNSGKNKKMGVTKRTSGTERANAARGKSDTLKNGNGPPVFKVVPPLEAFKSFDGQELLFGTSSQLEHGHSEDQDEEIQHTADSINKSNVVPRPAVSKGLGSSLFRLSSSKNLWSASSRDLTGAVLQVDEIDLSERSIEVSTPAAKYKRKTGIRDLSGQNVIDVEKDTRTLAANIDTRELDNMNEPSLAEDDLVYRENLESTNAKLNSQTPANISEAMLERPPPDKPIFGGFTTSELAKQVAAYGFKPIKSRDKMISLLEKCWENQSKSSKLEPKPNQRNHKSQGDDLAERQLLGLKPRSDSISFVITRSPKKRLAKTSVKSQEPKSFSLSNEGPRITSKLPMKRFVSPCAILIDDDQSSDSVGEALPLSPSHSSNGNGTLHHPQDCDEIHAPTTQMAIRSAKSSISVSSTTNLPSLSSQITKAVQSQPRIRAFKGLKQPTWYEKILMYDPIQLEDLAAWLNTGGFGLIGEDREVGAGVVREWCESKGICCVWKKQASAKSH</sequence>
<organism>
    <name type="scientific">Blastomyces gilchristii (strain SLH14081)</name>
    <name type="common">Blastomyces dermatitidis</name>
    <dbReference type="NCBI Taxonomy" id="559298"/>
    <lineage>
        <taxon>Eukaryota</taxon>
        <taxon>Fungi</taxon>
        <taxon>Dikarya</taxon>
        <taxon>Ascomycota</taxon>
        <taxon>Pezizomycotina</taxon>
        <taxon>Eurotiomycetes</taxon>
        <taxon>Eurotiomycetidae</taxon>
        <taxon>Onygenales</taxon>
        <taxon>Ajellomycetaceae</taxon>
        <taxon>Blastomyces</taxon>
    </lineage>
</organism>
<proteinExistence type="inferred from homology"/>
<gene>
    <name evidence="1" type="primary">SLX4</name>
    <name type="ORF">BDBG_04672</name>
</gene>
<dbReference type="EMBL" id="GG657456">
    <property type="protein sequence ID" value="OAT09112.1"/>
    <property type="molecule type" value="Genomic_DNA"/>
</dbReference>
<dbReference type="RefSeq" id="XP_002624808.1">
    <property type="nucleotide sequence ID" value="XM_002624762.1"/>
</dbReference>
<dbReference type="SMR" id="C5JR12"/>
<dbReference type="STRING" id="559298.C5JR12"/>
<dbReference type="GeneID" id="8504567"/>
<dbReference type="KEGG" id="bgh:BDBG_04672"/>
<dbReference type="VEuPathDB" id="FungiDB:BDBG_04672"/>
<dbReference type="HOGENOM" id="CLU_016773_0_0_1"/>
<dbReference type="OrthoDB" id="5349119at2759"/>
<dbReference type="Proteomes" id="UP000002038">
    <property type="component" value="Unassembled WGS sequence"/>
</dbReference>
<dbReference type="GO" id="GO:0033557">
    <property type="term" value="C:Slx1-Slx4 complex"/>
    <property type="evidence" value="ECO:0007669"/>
    <property type="project" value="UniProtKB-UniRule"/>
</dbReference>
<dbReference type="GO" id="GO:0017108">
    <property type="term" value="F:5'-flap endonuclease activity"/>
    <property type="evidence" value="ECO:0007669"/>
    <property type="project" value="InterPro"/>
</dbReference>
<dbReference type="GO" id="GO:0006310">
    <property type="term" value="P:DNA recombination"/>
    <property type="evidence" value="ECO:0007669"/>
    <property type="project" value="UniProtKB-UniRule"/>
</dbReference>
<dbReference type="GO" id="GO:0006281">
    <property type="term" value="P:DNA repair"/>
    <property type="evidence" value="ECO:0007669"/>
    <property type="project" value="UniProtKB-UniRule"/>
</dbReference>
<dbReference type="GO" id="GO:0006260">
    <property type="term" value="P:DNA replication"/>
    <property type="evidence" value="ECO:0007669"/>
    <property type="project" value="InterPro"/>
</dbReference>
<dbReference type="CDD" id="cd22999">
    <property type="entry name" value="SAP_SLX4"/>
    <property type="match status" value="1"/>
</dbReference>
<dbReference type="HAMAP" id="MF_03110">
    <property type="entry name" value="Endonuc_su_Slx4"/>
    <property type="match status" value="1"/>
</dbReference>
<dbReference type="InterPro" id="IPR027784">
    <property type="entry name" value="Slx4_ascomycetes"/>
</dbReference>
<dbReference type="InterPro" id="IPR018574">
    <property type="entry name" value="Structure-sp_endonuc_su_Slx4"/>
</dbReference>
<dbReference type="Pfam" id="PF09494">
    <property type="entry name" value="Slx4"/>
    <property type="match status" value="1"/>
</dbReference>
<accession>C5JR12</accession>
<accession>A0A179URQ6</accession>
<reference key="1">
    <citation type="journal article" date="2015" name="PLoS Genet.">
        <title>The dynamic genome and transcriptome of the human fungal pathogen Blastomyces and close relative Emmonsia.</title>
        <authorList>
            <person name="Munoz J.F."/>
            <person name="Gauthier G.M."/>
            <person name="Desjardins C.A."/>
            <person name="Gallo J.E."/>
            <person name="Holder J."/>
            <person name="Sullivan T.D."/>
            <person name="Marty A.J."/>
            <person name="Carmen J.C."/>
            <person name="Chen Z."/>
            <person name="Ding L."/>
            <person name="Gujja S."/>
            <person name="Magrini V."/>
            <person name="Misas E."/>
            <person name="Mitreva M."/>
            <person name="Priest M."/>
            <person name="Saif S."/>
            <person name="Whiston E.A."/>
            <person name="Young S."/>
            <person name="Zeng Q."/>
            <person name="Goldman W.E."/>
            <person name="Mardis E.R."/>
            <person name="Taylor J.W."/>
            <person name="McEwen J.G."/>
            <person name="Clay O.K."/>
            <person name="Klein B.S."/>
            <person name="Cuomo C.A."/>
        </authorList>
    </citation>
    <scope>NUCLEOTIDE SEQUENCE [LARGE SCALE GENOMIC DNA]</scope>
    <source>
        <strain>SLH14081</strain>
    </source>
</reference>
<protein>
    <recommendedName>
        <fullName evidence="1">Structure-specific endonuclease subunit SLX4</fullName>
    </recommendedName>
</protein>
<evidence type="ECO:0000255" key="1">
    <source>
        <dbReference type="HAMAP-Rule" id="MF_03110"/>
    </source>
</evidence>
<evidence type="ECO:0000256" key="2">
    <source>
        <dbReference type="SAM" id="MobiDB-lite"/>
    </source>
</evidence>
<comment type="function">
    <text evidence="1">Regulatory subunit of the SLX1-SLX4 structure-specific endonuclease that resolves DNA secondary structures generated during DNA repair and recombination. Has endonuclease activity towards branched DNA substrates, introducing single-strand cuts in duplex DNA close to junctions with ss-DNA.</text>
</comment>
<comment type="subunit">
    <text evidence="1">Forms a heterodimer with SLX1.</text>
</comment>
<comment type="subcellular location">
    <subcellularLocation>
        <location evidence="1">Nucleus</location>
    </subcellularLocation>
</comment>
<comment type="PTM">
    <text evidence="1">Phosphorylated in response to DNA damage.</text>
</comment>
<comment type="similarity">
    <text evidence="1">Belongs to the SLX4 family.</text>
</comment>
<name>SLX4_BLAGS</name>